<accession>P28863</accession>
<evidence type="ECO:0000250" key="1"/>
<evidence type="ECO:0000250" key="2">
    <source>
        <dbReference type="UniProtKB" id="P08254"/>
    </source>
</evidence>
<evidence type="ECO:0000255" key="3">
    <source>
        <dbReference type="PROSITE-ProRule" id="PRU10095"/>
    </source>
</evidence>
<evidence type="ECO:0000305" key="4"/>
<keyword id="KW-0106">Calcium</keyword>
<keyword id="KW-0177">Collagen degradation</keyword>
<keyword id="KW-1015">Disulfide bond</keyword>
<keyword id="KW-0272">Extracellular matrix</keyword>
<keyword id="KW-0378">Hydrolase</keyword>
<keyword id="KW-0391">Immunity</keyword>
<keyword id="KW-0399">Innate immunity</keyword>
<keyword id="KW-0479">Metal-binding</keyword>
<keyword id="KW-0482">Metalloprotease</keyword>
<keyword id="KW-0645">Protease</keyword>
<keyword id="KW-1185">Reference proteome</keyword>
<keyword id="KW-0677">Repeat</keyword>
<keyword id="KW-0964">Secreted</keyword>
<keyword id="KW-0732">Signal</keyword>
<keyword id="KW-0862">Zinc</keyword>
<keyword id="KW-0865">Zymogen</keyword>
<dbReference type="EC" id="3.4.24.17"/>
<dbReference type="EMBL" id="M25664">
    <property type="protein sequence ID" value="AAA31467.1"/>
    <property type="molecule type" value="mRNA"/>
</dbReference>
<dbReference type="PIR" id="A37306">
    <property type="entry name" value="KCRBS1"/>
</dbReference>
<dbReference type="RefSeq" id="NP_001075749.1">
    <property type="nucleotide sequence ID" value="NM_001082280.1"/>
</dbReference>
<dbReference type="SMR" id="P28863"/>
<dbReference type="FunCoup" id="P28863">
    <property type="interactions" value="16"/>
</dbReference>
<dbReference type="STRING" id="9986.ENSOCUP00000013084"/>
<dbReference type="MEROPS" id="M10.005"/>
<dbReference type="PaxDb" id="9986-ENSOCUP00000013084"/>
<dbReference type="Ensembl" id="ENSOCUT00000015227.3">
    <property type="protein sequence ID" value="ENSOCUP00000013084.3"/>
    <property type="gene ID" value="ENSOCUG00000029337.2"/>
</dbReference>
<dbReference type="GeneID" id="100009111"/>
<dbReference type="KEGG" id="ocu:100009111"/>
<dbReference type="CTD" id="4314"/>
<dbReference type="eggNOG" id="KOG1565">
    <property type="taxonomic scope" value="Eukaryota"/>
</dbReference>
<dbReference type="GeneTree" id="ENSGT00940000159759"/>
<dbReference type="InParanoid" id="P28863"/>
<dbReference type="OrthoDB" id="406838at2759"/>
<dbReference type="Proteomes" id="UP000001811">
    <property type="component" value="Chromosome 1"/>
</dbReference>
<dbReference type="Bgee" id="ENSOCUG00000029337">
    <property type="expression patterns" value="Expressed in uterus"/>
</dbReference>
<dbReference type="GO" id="GO:0005829">
    <property type="term" value="C:cytosol"/>
    <property type="evidence" value="ECO:0007669"/>
    <property type="project" value="Ensembl"/>
</dbReference>
<dbReference type="GO" id="GO:0031012">
    <property type="term" value="C:extracellular matrix"/>
    <property type="evidence" value="ECO:0007669"/>
    <property type="project" value="InterPro"/>
</dbReference>
<dbReference type="GO" id="GO:0005576">
    <property type="term" value="C:extracellular region"/>
    <property type="evidence" value="ECO:0007669"/>
    <property type="project" value="UniProtKB-KW"/>
</dbReference>
<dbReference type="GO" id="GO:0005739">
    <property type="term" value="C:mitochondrion"/>
    <property type="evidence" value="ECO:0007669"/>
    <property type="project" value="Ensembl"/>
</dbReference>
<dbReference type="GO" id="GO:0004222">
    <property type="term" value="F:metalloendopeptidase activity"/>
    <property type="evidence" value="ECO:0007669"/>
    <property type="project" value="UniProtKB-EC"/>
</dbReference>
<dbReference type="GO" id="GO:0008233">
    <property type="term" value="F:peptidase activity"/>
    <property type="evidence" value="ECO:0000250"/>
    <property type="project" value="UniProtKB"/>
</dbReference>
<dbReference type="GO" id="GO:0008270">
    <property type="term" value="F:zinc ion binding"/>
    <property type="evidence" value="ECO:0007669"/>
    <property type="project" value="InterPro"/>
</dbReference>
<dbReference type="GO" id="GO:0071230">
    <property type="term" value="P:cellular response to amino acid stimulus"/>
    <property type="evidence" value="ECO:0007669"/>
    <property type="project" value="Ensembl"/>
</dbReference>
<dbReference type="GO" id="GO:0034614">
    <property type="term" value="P:cellular response to reactive oxygen species"/>
    <property type="evidence" value="ECO:0007669"/>
    <property type="project" value="Ensembl"/>
</dbReference>
<dbReference type="GO" id="GO:0071492">
    <property type="term" value="P:cellular response to UV-A"/>
    <property type="evidence" value="ECO:0000250"/>
    <property type="project" value="UniProtKB"/>
</dbReference>
<dbReference type="GO" id="GO:0030574">
    <property type="term" value="P:collagen catabolic process"/>
    <property type="evidence" value="ECO:0007669"/>
    <property type="project" value="UniProtKB-KW"/>
</dbReference>
<dbReference type="GO" id="GO:0030198">
    <property type="term" value="P:extracellular matrix organization"/>
    <property type="evidence" value="ECO:0007669"/>
    <property type="project" value="TreeGrafter"/>
</dbReference>
<dbReference type="GO" id="GO:0045087">
    <property type="term" value="P:innate immune response"/>
    <property type="evidence" value="ECO:0007669"/>
    <property type="project" value="UniProtKB-KW"/>
</dbReference>
<dbReference type="GO" id="GO:0051898">
    <property type="term" value="P:negative regulation of phosphatidylinositol 3-kinase/protein kinase B signal transduction"/>
    <property type="evidence" value="ECO:0007669"/>
    <property type="project" value="Ensembl"/>
</dbReference>
<dbReference type="GO" id="GO:2000378">
    <property type="term" value="P:negative regulation of reactive oxygen species metabolic process"/>
    <property type="evidence" value="ECO:0007669"/>
    <property type="project" value="Ensembl"/>
</dbReference>
<dbReference type="GO" id="GO:0031334">
    <property type="term" value="P:positive regulation of protein-containing complex assembly"/>
    <property type="evidence" value="ECO:0007669"/>
    <property type="project" value="Ensembl"/>
</dbReference>
<dbReference type="GO" id="GO:0030163">
    <property type="term" value="P:protein catabolic process"/>
    <property type="evidence" value="ECO:0007669"/>
    <property type="project" value="Ensembl"/>
</dbReference>
<dbReference type="GO" id="GO:0006508">
    <property type="term" value="P:proteolysis"/>
    <property type="evidence" value="ECO:0007669"/>
    <property type="project" value="UniProtKB-KW"/>
</dbReference>
<dbReference type="GO" id="GO:0030334">
    <property type="term" value="P:regulation of cell migration"/>
    <property type="evidence" value="ECO:0007669"/>
    <property type="project" value="Ensembl"/>
</dbReference>
<dbReference type="CDD" id="cd00094">
    <property type="entry name" value="HX"/>
    <property type="match status" value="1"/>
</dbReference>
<dbReference type="CDD" id="cd04278">
    <property type="entry name" value="ZnMc_MMP"/>
    <property type="match status" value="1"/>
</dbReference>
<dbReference type="FunFam" id="3.40.390.10:FF:000007">
    <property type="entry name" value="Collagenase 3"/>
    <property type="match status" value="1"/>
</dbReference>
<dbReference type="FunFam" id="2.110.10.10:FF:000002">
    <property type="entry name" value="Matrix metallopeptidase 3"/>
    <property type="match status" value="1"/>
</dbReference>
<dbReference type="Gene3D" id="3.40.390.10">
    <property type="entry name" value="Collagenase (Catalytic Domain)"/>
    <property type="match status" value="1"/>
</dbReference>
<dbReference type="Gene3D" id="2.110.10.10">
    <property type="entry name" value="Hemopexin-like domain"/>
    <property type="match status" value="1"/>
</dbReference>
<dbReference type="InterPro" id="IPR000585">
    <property type="entry name" value="Hemopexin-like_dom"/>
</dbReference>
<dbReference type="InterPro" id="IPR036375">
    <property type="entry name" value="Hemopexin-like_dom_sf"/>
</dbReference>
<dbReference type="InterPro" id="IPR018487">
    <property type="entry name" value="Hemopexin-like_repeat"/>
</dbReference>
<dbReference type="InterPro" id="IPR018486">
    <property type="entry name" value="Hemopexin_CS"/>
</dbReference>
<dbReference type="InterPro" id="IPR033739">
    <property type="entry name" value="M10A_MMP"/>
</dbReference>
<dbReference type="InterPro" id="IPR024079">
    <property type="entry name" value="MetalloPept_cat_dom_sf"/>
</dbReference>
<dbReference type="InterPro" id="IPR001818">
    <property type="entry name" value="Pept_M10_metallopeptidase"/>
</dbReference>
<dbReference type="InterPro" id="IPR021190">
    <property type="entry name" value="Pept_M10A"/>
</dbReference>
<dbReference type="InterPro" id="IPR021158">
    <property type="entry name" value="Pept_M10A_Zn_BS"/>
</dbReference>
<dbReference type="InterPro" id="IPR006026">
    <property type="entry name" value="Peptidase_Metallo"/>
</dbReference>
<dbReference type="InterPro" id="IPR002477">
    <property type="entry name" value="Peptidoglycan-bd-like"/>
</dbReference>
<dbReference type="InterPro" id="IPR036365">
    <property type="entry name" value="PGBD-like_sf"/>
</dbReference>
<dbReference type="PANTHER" id="PTHR10201">
    <property type="entry name" value="MATRIX METALLOPROTEINASE"/>
    <property type="match status" value="1"/>
</dbReference>
<dbReference type="PANTHER" id="PTHR10201:SF215">
    <property type="entry name" value="STROMELYSIN-1"/>
    <property type="match status" value="1"/>
</dbReference>
<dbReference type="Pfam" id="PF00045">
    <property type="entry name" value="Hemopexin"/>
    <property type="match status" value="4"/>
</dbReference>
<dbReference type="Pfam" id="PF00413">
    <property type="entry name" value="Peptidase_M10"/>
    <property type="match status" value="1"/>
</dbReference>
<dbReference type="Pfam" id="PF01471">
    <property type="entry name" value="PG_binding_1"/>
    <property type="match status" value="1"/>
</dbReference>
<dbReference type="PIRSF" id="PIRSF001191">
    <property type="entry name" value="Peptidase_M10A_matrix"/>
    <property type="match status" value="1"/>
</dbReference>
<dbReference type="PRINTS" id="PR00138">
    <property type="entry name" value="MATRIXIN"/>
</dbReference>
<dbReference type="SMART" id="SM00120">
    <property type="entry name" value="HX"/>
    <property type="match status" value="4"/>
</dbReference>
<dbReference type="SMART" id="SM00235">
    <property type="entry name" value="ZnMc"/>
    <property type="match status" value="1"/>
</dbReference>
<dbReference type="SUPFAM" id="SSF50923">
    <property type="entry name" value="Hemopexin-like domain"/>
    <property type="match status" value="1"/>
</dbReference>
<dbReference type="SUPFAM" id="SSF55486">
    <property type="entry name" value="Metalloproteases ('zincins'), catalytic domain"/>
    <property type="match status" value="1"/>
</dbReference>
<dbReference type="SUPFAM" id="SSF47090">
    <property type="entry name" value="PGBD-like"/>
    <property type="match status" value="1"/>
</dbReference>
<dbReference type="PROSITE" id="PS00546">
    <property type="entry name" value="CYSTEINE_SWITCH"/>
    <property type="match status" value="1"/>
</dbReference>
<dbReference type="PROSITE" id="PS00024">
    <property type="entry name" value="HEMOPEXIN"/>
    <property type="match status" value="1"/>
</dbReference>
<dbReference type="PROSITE" id="PS51642">
    <property type="entry name" value="HEMOPEXIN_2"/>
    <property type="match status" value="4"/>
</dbReference>
<dbReference type="PROSITE" id="PS00142">
    <property type="entry name" value="ZINC_PROTEASE"/>
    <property type="match status" value="1"/>
</dbReference>
<feature type="signal peptide" evidence="4">
    <location>
        <begin position="1"/>
        <end position="17"/>
    </location>
</feature>
<feature type="propeptide" id="PRO_0000028732" description="Activation peptide">
    <location>
        <begin position="18"/>
        <end position="100"/>
    </location>
</feature>
<feature type="chain" id="PRO_0000028733" description="Stromelysin-1">
    <location>
        <begin position="101"/>
        <end position="478"/>
    </location>
</feature>
<feature type="repeat" description="Hemopexin 1">
    <location>
        <begin position="288"/>
        <end position="337"/>
    </location>
</feature>
<feature type="repeat" description="Hemopexin 2">
    <location>
        <begin position="338"/>
        <end position="384"/>
    </location>
</feature>
<feature type="repeat" description="Hemopexin 3">
    <location>
        <begin position="386"/>
        <end position="434"/>
    </location>
</feature>
<feature type="repeat" description="Hemopexin 4">
    <location>
        <begin position="435"/>
        <end position="478"/>
    </location>
</feature>
<feature type="short sequence motif" description="Cysteine switch" evidence="1">
    <location>
        <begin position="91"/>
        <end position="98"/>
    </location>
</feature>
<feature type="active site" evidence="3">
    <location>
        <position position="220"/>
    </location>
</feature>
<feature type="binding site" description="in inhibited form" evidence="1">
    <location>
        <position position="93"/>
    </location>
    <ligand>
        <name>Zn(2+)</name>
        <dbReference type="ChEBI" id="CHEBI:29105"/>
        <label>2</label>
        <note>catalytic</note>
    </ligand>
</feature>
<feature type="binding site" evidence="1">
    <location>
        <position position="125"/>
    </location>
    <ligand>
        <name>Ca(2+)</name>
        <dbReference type="ChEBI" id="CHEBI:29108"/>
        <label>1</label>
    </ligand>
</feature>
<feature type="binding site" evidence="1">
    <location>
        <position position="159"/>
    </location>
    <ligand>
        <name>Ca(2+)</name>
        <dbReference type="ChEBI" id="CHEBI:29108"/>
        <label>2</label>
    </ligand>
</feature>
<feature type="binding site" evidence="1">
    <location>
        <position position="169"/>
    </location>
    <ligand>
        <name>Zn(2+)</name>
        <dbReference type="ChEBI" id="CHEBI:29105"/>
        <label>1</label>
    </ligand>
</feature>
<feature type="binding site" evidence="1">
    <location>
        <position position="171"/>
    </location>
    <ligand>
        <name>Zn(2+)</name>
        <dbReference type="ChEBI" id="CHEBI:29105"/>
        <label>1</label>
    </ligand>
</feature>
<feature type="binding site" evidence="1">
    <location>
        <position position="176"/>
    </location>
    <ligand>
        <name>Ca(2+)</name>
        <dbReference type="ChEBI" id="CHEBI:29108"/>
        <label>3</label>
    </ligand>
</feature>
<feature type="binding site" evidence="1">
    <location>
        <position position="177"/>
    </location>
    <ligand>
        <name>Ca(2+)</name>
        <dbReference type="ChEBI" id="CHEBI:29108"/>
        <label>3</label>
    </ligand>
</feature>
<feature type="binding site" evidence="1">
    <location>
        <position position="179"/>
    </location>
    <ligand>
        <name>Ca(2+)</name>
        <dbReference type="ChEBI" id="CHEBI:29108"/>
        <label>3</label>
    </ligand>
</feature>
<feature type="binding site" evidence="1">
    <location>
        <position position="181"/>
    </location>
    <ligand>
        <name>Ca(2+)</name>
        <dbReference type="ChEBI" id="CHEBI:29108"/>
        <label>3</label>
    </ligand>
</feature>
<feature type="binding site" evidence="1">
    <location>
        <position position="184"/>
    </location>
    <ligand>
        <name>Zn(2+)</name>
        <dbReference type="ChEBI" id="CHEBI:29105"/>
        <label>1</label>
    </ligand>
</feature>
<feature type="binding site" evidence="1">
    <location>
        <position position="191"/>
    </location>
    <ligand>
        <name>Ca(2+)</name>
        <dbReference type="ChEBI" id="CHEBI:29108"/>
        <label>2</label>
    </ligand>
</feature>
<feature type="binding site" evidence="1">
    <location>
        <position position="193"/>
    </location>
    <ligand>
        <name>Ca(2+)</name>
        <dbReference type="ChEBI" id="CHEBI:29108"/>
        <label>2</label>
    </ligand>
</feature>
<feature type="binding site" evidence="1">
    <location>
        <position position="195"/>
    </location>
    <ligand>
        <name>Ca(2+)</name>
        <dbReference type="ChEBI" id="CHEBI:29108"/>
        <label>2</label>
    </ligand>
</feature>
<feature type="binding site" evidence="1">
    <location>
        <position position="197"/>
    </location>
    <ligand>
        <name>Zn(2+)</name>
        <dbReference type="ChEBI" id="CHEBI:29105"/>
        <label>1</label>
    </ligand>
</feature>
<feature type="binding site" evidence="1">
    <location>
        <position position="199"/>
    </location>
    <ligand>
        <name>Ca(2+)</name>
        <dbReference type="ChEBI" id="CHEBI:29108"/>
        <label>3</label>
    </ligand>
</feature>
<feature type="binding site" evidence="1">
    <location>
        <position position="200"/>
    </location>
    <ligand>
        <name>Ca(2+)</name>
        <dbReference type="ChEBI" id="CHEBI:29108"/>
        <label>1</label>
    </ligand>
</feature>
<feature type="binding site" evidence="1">
    <location>
        <position position="202"/>
    </location>
    <ligand>
        <name>Ca(2+)</name>
        <dbReference type="ChEBI" id="CHEBI:29108"/>
        <label>1</label>
    </ligand>
</feature>
<feature type="binding site" evidence="1">
    <location>
        <position position="202"/>
    </location>
    <ligand>
        <name>Ca(2+)</name>
        <dbReference type="ChEBI" id="CHEBI:29108"/>
        <label>3</label>
    </ligand>
</feature>
<feature type="binding site" evidence="1">
    <location>
        <position position="219"/>
    </location>
    <ligand>
        <name>Zn(2+)</name>
        <dbReference type="ChEBI" id="CHEBI:29105"/>
        <label>2</label>
        <note>catalytic</note>
    </ligand>
</feature>
<feature type="binding site" evidence="1">
    <location>
        <position position="223"/>
    </location>
    <ligand>
        <name>Zn(2+)</name>
        <dbReference type="ChEBI" id="CHEBI:29105"/>
        <label>2</label>
        <note>catalytic</note>
    </ligand>
</feature>
<feature type="binding site" evidence="1">
    <location>
        <position position="229"/>
    </location>
    <ligand>
        <name>Zn(2+)</name>
        <dbReference type="ChEBI" id="CHEBI:29105"/>
        <label>2</label>
        <note>catalytic</note>
    </ligand>
</feature>
<feature type="binding site" evidence="1">
    <location>
        <position position="298"/>
    </location>
    <ligand>
        <name>Ca(2+)</name>
        <dbReference type="ChEBI" id="CHEBI:29108"/>
        <label>4</label>
    </ligand>
</feature>
<feature type="binding site" evidence="1">
    <location>
        <position position="390"/>
    </location>
    <ligand>
        <name>Ca(2+)</name>
        <dbReference type="ChEBI" id="CHEBI:29108"/>
        <label>4</label>
    </ligand>
</feature>
<feature type="binding site" evidence="1">
    <location>
        <position position="439"/>
    </location>
    <ligand>
        <name>Ca(2+)</name>
        <dbReference type="ChEBI" id="CHEBI:29108"/>
        <label>4</label>
    </ligand>
</feature>
<feature type="disulfide bond" evidence="1">
    <location>
        <begin position="291"/>
        <end position="478"/>
    </location>
</feature>
<feature type="sequence conflict" description="In Ref. 2." evidence="4" ref="2">
    <original>N</original>
    <variation>D</variation>
    <location>
        <position position="83"/>
    </location>
</feature>
<feature type="sequence conflict" description="In Ref. 2." evidence="4" ref="2">
    <original>R</original>
    <variation>K</variation>
    <location>
        <position position="128"/>
    </location>
</feature>
<sequence length="478" mass="53942">MKTLPTLLLLCVALCSAYPLDGASRDADTTNMDLLQQYLENYYNLEKDVKQFVKRKDSSPVVKKIQEMQKFLGLEVTGKLDSNTLEVIRKPRCGVPDVGHFSTFPGTPKWTKTHLTYRIVNYTPDLPRDAVDAAIEKALKVWEEVTPLTFSRKYEGEADIMISFGVREHGDFIPFDGPGNVLAHAYAPGPGINGDAHFDDDEQWTKDTTGTNLFLVAAHELGHSLGLFHSANPEALMYPVYNAFTDLARFRLSQDDVDGIQSLYGPAPASPDNSGVPMEPVPPGSGTPVMCDPDLSFDAISTLRGEILFFKDRYFWRKSLRILEPEFHLISSFWPSLPSAVDAAYEVISRDTVFIFKGTQFWAIRGNEVQAGYPRSIHTLGFPSTIRKIDAAISDKERKKTYFFVEDKYWRFDEKRQSLEPGFPRHIAEDFPGINPKIDAVFEAFGFFYFFSGSSQSEFDPNAKKVTHVLKSNSWFQC</sequence>
<name>MMP3_RABIT</name>
<organism>
    <name type="scientific">Oryctolagus cuniculus</name>
    <name type="common">Rabbit</name>
    <dbReference type="NCBI Taxonomy" id="9986"/>
    <lineage>
        <taxon>Eukaryota</taxon>
        <taxon>Metazoa</taxon>
        <taxon>Chordata</taxon>
        <taxon>Craniata</taxon>
        <taxon>Vertebrata</taxon>
        <taxon>Euteleostomi</taxon>
        <taxon>Mammalia</taxon>
        <taxon>Eutheria</taxon>
        <taxon>Euarchontoglires</taxon>
        <taxon>Glires</taxon>
        <taxon>Lagomorpha</taxon>
        <taxon>Leporidae</taxon>
        <taxon>Oryctolagus</taxon>
    </lineage>
</organism>
<gene>
    <name type="primary">MMP3</name>
</gene>
<comment type="function">
    <text evidence="2">Metalloproteinase with a rather broad substrate specificity that can degrade fibronectin, laminin, gelatins of type I, III, IV, and V; collagens III, IV, X, and IX, and cartilage proteoglycans. Activates different molecules including growth factors, plasminogen or other matrix metalloproteinases such as MMP9. Once released into the extracellular matrix (ECM), the inactive pro-enzyme is activated by the plasmin cascade signaling pathway. Also acts intracellularly. For example, in dopaminergic neurons, gets activated by the serine protease HTRA2 upon stress and plays a pivotal role in DA neuronal degeneration by mediating microglial activation and alpha-synuclein/SNCA cleavage. In addition, plays a role in immune response and possesses antiviral activity against various viruses. Mechanistically, translocates from the cytoplasm into the cell nucleus upon virus infection to influence NF-kappa-B activities.</text>
</comment>
<comment type="catalytic activity">
    <reaction evidence="2">
        <text>Preferential cleavage where P1', P2' and P3' are hydrophobic residues.</text>
        <dbReference type="EC" id="3.4.24.17"/>
    </reaction>
</comment>
<comment type="cofactor">
    <cofactor evidence="1">
        <name>Ca(2+)</name>
        <dbReference type="ChEBI" id="CHEBI:29108"/>
    </cofactor>
    <text evidence="1">Binds 4 Ca(2+) ions per subunit.</text>
</comment>
<comment type="cofactor">
    <cofactor evidence="1">
        <name>Zn(2+)</name>
        <dbReference type="ChEBI" id="CHEBI:29105"/>
    </cofactor>
    <text evidence="1">Binds 2 Zn(2+) ions per subunit.</text>
</comment>
<comment type="subcellular location">
    <subcellularLocation>
        <location evidence="4">Secreted</location>
        <location evidence="4">Extracellular space</location>
        <location evidence="4">Extracellular matrix</location>
    </subcellularLocation>
</comment>
<comment type="similarity">
    <text evidence="4">Belongs to the peptidase M10A family.</text>
</comment>
<reference key="1">
    <citation type="journal article" date="1987" name="Arthritis Rheum.">
        <title>Cloning of a complementary DNA for rabbit proactivator. A metalloproteinase that activates synovial cell collagenase, shares homology with stromelysin and transin, and is coordinately regulated with collagenase.</title>
        <authorList>
            <person name="Fini M.E."/>
            <person name="Karmilowicz M.J."/>
            <person name="Ruby P.L."/>
            <person name="Beeman A.M."/>
            <person name="Borges K.A."/>
            <person name="Brinckerhoff C.E."/>
        </authorList>
    </citation>
    <scope>NUCLEOTIDE SEQUENCE [MRNA]</scope>
</reference>
<reference key="2">
    <citation type="journal article" date="1986" name="Biochem. J.">
        <title>Comparison of human stromelysin and collagenase by cloning and sequence analysis.</title>
        <authorList>
            <person name="Whitham S.E."/>
            <person name="Murphy G."/>
            <person name="Angel P."/>
            <person name="Rahmsdorf H.J."/>
            <person name="Smith B."/>
            <person name="Lyons A."/>
            <person name="Harris T.J.R."/>
            <person name="Reynolds J.J."/>
            <person name="Herrlich P."/>
            <person name="Docherty A.J.P."/>
        </authorList>
    </citation>
    <scope>NUCLEOTIDE SEQUENCE [MRNA] OF 1-167</scope>
</reference>
<protein>
    <recommendedName>
        <fullName>Stromelysin-1</fullName>
        <shortName>SL-1</shortName>
        <ecNumber>3.4.24.17</ecNumber>
    </recommendedName>
    <alternativeName>
        <fullName>Matrix metalloproteinase-3</fullName>
        <shortName>MMP-3</shortName>
    </alternativeName>
    <alternativeName>
        <fullName>Transin-1</fullName>
    </alternativeName>
</protein>
<proteinExistence type="evidence at transcript level"/>